<organism>
    <name type="scientific">Haemophilus ducreyi (strain 35000HP / ATCC 700724)</name>
    <dbReference type="NCBI Taxonomy" id="233412"/>
    <lineage>
        <taxon>Bacteria</taxon>
        <taxon>Pseudomonadati</taxon>
        <taxon>Pseudomonadota</taxon>
        <taxon>Gammaproteobacteria</taxon>
        <taxon>Pasteurellales</taxon>
        <taxon>Pasteurellaceae</taxon>
        <taxon>Haemophilus</taxon>
    </lineage>
</organism>
<accession>Q7VN44</accession>
<evidence type="ECO:0000255" key="1">
    <source>
        <dbReference type="HAMAP-Rule" id="MF_00436"/>
    </source>
</evidence>
<evidence type="ECO:0000255" key="2">
    <source>
        <dbReference type="PROSITE-ProRule" id="PRU01346"/>
    </source>
</evidence>
<evidence type="ECO:0000256" key="3">
    <source>
        <dbReference type="SAM" id="MobiDB-lite"/>
    </source>
</evidence>
<protein>
    <recommendedName>
        <fullName evidence="1">RNA-binding protein Hfq</fullName>
    </recommendedName>
</protein>
<name>HFQ_HAEDU</name>
<dbReference type="EMBL" id="AE017143">
    <property type="protein sequence ID" value="AAP95651.1"/>
    <property type="molecule type" value="Genomic_DNA"/>
</dbReference>
<dbReference type="RefSeq" id="WP_010944703.1">
    <property type="nucleotide sequence ID" value="NC_002940.2"/>
</dbReference>
<dbReference type="SMR" id="Q7VN44"/>
<dbReference type="STRING" id="233412.HD_0741"/>
<dbReference type="KEGG" id="hdu:HD_0741"/>
<dbReference type="eggNOG" id="COG1923">
    <property type="taxonomic scope" value="Bacteria"/>
</dbReference>
<dbReference type="HOGENOM" id="CLU_113688_2_2_6"/>
<dbReference type="OrthoDB" id="9799751at2"/>
<dbReference type="PHI-base" id="PHI:4104"/>
<dbReference type="Proteomes" id="UP000001022">
    <property type="component" value="Chromosome"/>
</dbReference>
<dbReference type="GO" id="GO:0005829">
    <property type="term" value="C:cytosol"/>
    <property type="evidence" value="ECO:0007669"/>
    <property type="project" value="TreeGrafter"/>
</dbReference>
<dbReference type="GO" id="GO:0003723">
    <property type="term" value="F:RNA binding"/>
    <property type="evidence" value="ECO:0007669"/>
    <property type="project" value="UniProtKB-UniRule"/>
</dbReference>
<dbReference type="GO" id="GO:0006355">
    <property type="term" value="P:regulation of DNA-templated transcription"/>
    <property type="evidence" value="ECO:0007669"/>
    <property type="project" value="InterPro"/>
</dbReference>
<dbReference type="GO" id="GO:0043487">
    <property type="term" value="P:regulation of RNA stability"/>
    <property type="evidence" value="ECO:0007669"/>
    <property type="project" value="TreeGrafter"/>
</dbReference>
<dbReference type="GO" id="GO:0045974">
    <property type="term" value="P:regulation of translation, ncRNA-mediated"/>
    <property type="evidence" value="ECO:0007669"/>
    <property type="project" value="TreeGrafter"/>
</dbReference>
<dbReference type="CDD" id="cd01716">
    <property type="entry name" value="Hfq"/>
    <property type="match status" value="1"/>
</dbReference>
<dbReference type="FunFam" id="2.30.30.100:FF:000001">
    <property type="entry name" value="RNA-binding protein Hfq"/>
    <property type="match status" value="1"/>
</dbReference>
<dbReference type="Gene3D" id="2.30.30.100">
    <property type="match status" value="1"/>
</dbReference>
<dbReference type="HAMAP" id="MF_00436">
    <property type="entry name" value="Hfq"/>
    <property type="match status" value="1"/>
</dbReference>
<dbReference type="InterPro" id="IPR005001">
    <property type="entry name" value="Hfq"/>
</dbReference>
<dbReference type="InterPro" id="IPR010920">
    <property type="entry name" value="LSM_dom_sf"/>
</dbReference>
<dbReference type="InterPro" id="IPR047575">
    <property type="entry name" value="Sm"/>
</dbReference>
<dbReference type="NCBIfam" id="TIGR02383">
    <property type="entry name" value="Hfq"/>
    <property type="match status" value="1"/>
</dbReference>
<dbReference type="NCBIfam" id="NF001602">
    <property type="entry name" value="PRK00395.1"/>
    <property type="match status" value="1"/>
</dbReference>
<dbReference type="PANTHER" id="PTHR34772">
    <property type="entry name" value="RNA-BINDING PROTEIN HFQ"/>
    <property type="match status" value="1"/>
</dbReference>
<dbReference type="PANTHER" id="PTHR34772:SF1">
    <property type="entry name" value="RNA-BINDING PROTEIN HFQ"/>
    <property type="match status" value="1"/>
</dbReference>
<dbReference type="Pfam" id="PF17209">
    <property type="entry name" value="Hfq"/>
    <property type="match status" value="1"/>
</dbReference>
<dbReference type="SUPFAM" id="SSF50182">
    <property type="entry name" value="Sm-like ribonucleoproteins"/>
    <property type="match status" value="1"/>
</dbReference>
<dbReference type="PROSITE" id="PS52002">
    <property type="entry name" value="SM"/>
    <property type="match status" value="1"/>
</dbReference>
<reference key="1">
    <citation type="submission" date="2003-06" db="EMBL/GenBank/DDBJ databases">
        <title>The complete genome sequence of Haemophilus ducreyi.</title>
        <authorList>
            <person name="Munson R.S. Jr."/>
            <person name="Ray W.C."/>
            <person name="Mahairas G."/>
            <person name="Sabo P."/>
            <person name="Mungur R."/>
            <person name="Johnson L."/>
            <person name="Nguyen D."/>
            <person name="Wang J."/>
            <person name="Forst C."/>
            <person name="Hood L."/>
        </authorList>
    </citation>
    <scope>NUCLEOTIDE SEQUENCE [LARGE SCALE GENOMIC DNA]</scope>
    <source>
        <strain>35000HP / ATCC 700724</strain>
    </source>
</reference>
<sequence length="101" mass="11165">MAKGQSLQDPYLNALRRERIPVSIYLVNGIKLQGQIESFDQFIILLKNTVSQMVYKHAISTVVPARSISHNNNGSSQAQAPQQAVQTTQPVEAIVATDKME</sequence>
<gene>
    <name evidence="1" type="primary">hfq</name>
    <name type="ordered locus">HD_0741</name>
</gene>
<feature type="chain" id="PRO_0000095641" description="RNA-binding protein Hfq">
    <location>
        <begin position="1"/>
        <end position="101"/>
    </location>
</feature>
<feature type="domain" description="Sm" evidence="2">
    <location>
        <begin position="9"/>
        <end position="68"/>
    </location>
</feature>
<feature type="region of interest" description="Disordered" evidence="3">
    <location>
        <begin position="68"/>
        <end position="91"/>
    </location>
</feature>
<feature type="compositionally biased region" description="Low complexity" evidence="3">
    <location>
        <begin position="77"/>
        <end position="91"/>
    </location>
</feature>
<proteinExistence type="inferred from homology"/>
<comment type="function">
    <text evidence="1">RNA chaperone that binds small regulatory RNA (sRNAs) and mRNAs to facilitate mRNA translational regulation in response to envelope stress, environmental stress and changes in metabolite concentrations. Also binds with high specificity to tRNAs.</text>
</comment>
<comment type="subunit">
    <text evidence="1">Homohexamer.</text>
</comment>
<comment type="similarity">
    <text evidence="1">Belongs to the Hfq family.</text>
</comment>
<keyword id="KW-1185">Reference proteome</keyword>
<keyword id="KW-0694">RNA-binding</keyword>
<keyword id="KW-0346">Stress response</keyword>